<proteinExistence type="inferred from homology"/>
<comment type="function">
    <text evidence="1">This protein binds to the 23S rRNA, and is important in its secondary structure. It is located near the subunit interface in the base of the L7/L12 stalk, and near the tRNA binding site of the peptidyltransferase center.</text>
</comment>
<comment type="subunit">
    <text evidence="1">Part of the 50S ribosomal subunit.</text>
</comment>
<comment type="similarity">
    <text evidence="1">Belongs to the universal ribosomal protein uL6 family.</text>
</comment>
<sequence>MSRIGKKPVTVPSGVTATVDGQTVKMKGPKGQLQFIVHDDVDVKFENGQVRVAPRSETKRARSLYGTARAQIANLVEGVTKGFEKKLEITGVGYRAAMQGKNLQLALGYSHDVVYQIPEGITIAVPKPTEITVTGIDPQRVGQVAAEIRAYRPPEPYKGKGVKYAGEFIFRKEGKKK</sequence>
<accession>A5ELL2</accession>
<reference key="1">
    <citation type="journal article" date="2007" name="Science">
        <title>Legumes symbioses: absence of nod genes in photosynthetic bradyrhizobia.</title>
        <authorList>
            <person name="Giraud E."/>
            <person name="Moulin L."/>
            <person name="Vallenet D."/>
            <person name="Barbe V."/>
            <person name="Cytryn E."/>
            <person name="Avarre J.-C."/>
            <person name="Jaubert M."/>
            <person name="Simon D."/>
            <person name="Cartieaux F."/>
            <person name="Prin Y."/>
            <person name="Bena G."/>
            <person name="Hannibal L."/>
            <person name="Fardoux J."/>
            <person name="Kojadinovic M."/>
            <person name="Vuillet L."/>
            <person name="Lajus A."/>
            <person name="Cruveiller S."/>
            <person name="Rouy Z."/>
            <person name="Mangenot S."/>
            <person name="Segurens B."/>
            <person name="Dossat C."/>
            <person name="Franck W.L."/>
            <person name="Chang W.-S."/>
            <person name="Saunders E."/>
            <person name="Bruce D."/>
            <person name="Richardson P."/>
            <person name="Normand P."/>
            <person name="Dreyfus B."/>
            <person name="Pignol D."/>
            <person name="Stacey G."/>
            <person name="Emerich D."/>
            <person name="Vermeglio A."/>
            <person name="Medigue C."/>
            <person name="Sadowsky M."/>
        </authorList>
    </citation>
    <scope>NUCLEOTIDE SEQUENCE [LARGE SCALE GENOMIC DNA]</scope>
    <source>
        <strain>BTAi1 / ATCC BAA-1182</strain>
    </source>
</reference>
<dbReference type="EMBL" id="CP000494">
    <property type="protein sequence ID" value="ABQ37056.1"/>
    <property type="molecule type" value="Genomic_DNA"/>
</dbReference>
<dbReference type="RefSeq" id="WP_012045036.1">
    <property type="nucleotide sequence ID" value="NC_009485.1"/>
</dbReference>
<dbReference type="SMR" id="A5ELL2"/>
<dbReference type="STRING" id="288000.BBta_5055"/>
<dbReference type="KEGG" id="bbt:BBta_5055"/>
<dbReference type="eggNOG" id="COG0097">
    <property type="taxonomic scope" value="Bacteria"/>
</dbReference>
<dbReference type="HOGENOM" id="CLU_065464_1_2_5"/>
<dbReference type="OrthoDB" id="9805007at2"/>
<dbReference type="Proteomes" id="UP000000246">
    <property type="component" value="Chromosome"/>
</dbReference>
<dbReference type="GO" id="GO:0022625">
    <property type="term" value="C:cytosolic large ribosomal subunit"/>
    <property type="evidence" value="ECO:0007669"/>
    <property type="project" value="TreeGrafter"/>
</dbReference>
<dbReference type="GO" id="GO:0019843">
    <property type="term" value="F:rRNA binding"/>
    <property type="evidence" value="ECO:0007669"/>
    <property type="project" value="UniProtKB-UniRule"/>
</dbReference>
<dbReference type="GO" id="GO:0003735">
    <property type="term" value="F:structural constituent of ribosome"/>
    <property type="evidence" value="ECO:0007669"/>
    <property type="project" value="InterPro"/>
</dbReference>
<dbReference type="GO" id="GO:0002181">
    <property type="term" value="P:cytoplasmic translation"/>
    <property type="evidence" value="ECO:0007669"/>
    <property type="project" value="TreeGrafter"/>
</dbReference>
<dbReference type="FunFam" id="3.90.930.12:FF:000001">
    <property type="entry name" value="50S ribosomal protein L6"/>
    <property type="match status" value="1"/>
</dbReference>
<dbReference type="FunFam" id="3.90.930.12:FF:000002">
    <property type="entry name" value="50S ribosomal protein L6"/>
    <property type="match status" value="1"/>
</dbReference>
<dbReference type="Gene3D" id="3.90.930.12">
    <property type="entry name" value="Ribosomal protein L6, alpha-beta domain"/>
    <property type="match status" value="2"/>
</dbReference>
<dbReference type="HAMAP" id="MF_01365_B">
    <property type="entry name" value="Ribosomal_uL6_B"/>
    <property type="match status" value="1"/>
</dbReference>
<dbReference type="InterPro" id="IPR000702">
    <property type="entry name" value="Ribosomal_uL6-like"/>
</dbReference>
<dbReference type="InterPro" id="IPR036789">
    <property type="entry name" value="Ribosomal_uL6-like_a/b-dom_sf"/>
</dbReference>
<dbReference type="InterPro" id="IPR020040">
    <property type="entry name" value="Ribosomal_uL6_a/b-dom"/>
</dbReference>
<dbReference type="InterPro" id="IPR019906">
    <property type="entry name" value="Ribosomal_uL6_bac-type"/>
</dbReference>
<dbReference type="InterPro" id="IPR002358">
    <property type="entry name" value="Ribosomal_uL6_CS"/>
</dbReference>
<dbReference type="NCBIfam" id="TIGR03654">
    <property type="entry name" value="L6_bact"/>
    <property type="match status" value="1"/>
</dbReference>
<dbReference type="PANTHER" id="PTHR11655">
    <property type="entry name" value="60S/50S RIBOSOMAL PROTEIN L6/L9"/>
    <property type="match status" value="1"/>
</dbReference>
<dbReference type="PANTHER" id="PTHR11655:SF14">
    <property type="entry name" value="LARGE RIBOSOMAL SUBUNIT PROTEIN UL6M"/>
    <property type="match status" value="1"/>
</dbReference>
<dbReference type="Pfam" id="PF00347">
    <property type="entry name" value="Ribosomal_L6"/>
    <property type="match status" value="2"/>
</dbReference>
<dbReference type="PIRSF" id="PIRSF002162">
    <property type="entry name" value="Ribosomal_L6"/>
    <property type="match status" value="1"/>
</dbReference>
<dbReference type="PRINTS" id="PR00059">
    <property type="entry name" value="RIBOSOMALL6"/>
</dbReference>
<dbReference type="SUPFAM" id="SSF56053">
    <property type="entry name" value="Ribosomal protein L6"/>
    <property type="match status" value="2"/>
</dbReference>
<dbReference type="PROSITE" id="PS00525">
    <property type="entry name" value="RIBOSOMAL_L6_1"/>
    <property type="match status" value="1"/>
</dbReference>
<evidence type="ECO:0000255" key="1">
    <source>
        <dbReference type="HAMAP-Rule" id="MF_01365"/>
    </source>
</evidence>
<evidence type="ECO:0000305" key="2"/>
<gene>
    <name evidence="1" type="primary">rplF</name>
    <name type="ordered locus">BBta_5055</name>
</gene>
<name>RL6_BRASB</name>
<keyword id="KW-1185">Reference proteome</keyword>
<keyword id="KW-0687">Ribonucleoprotein</keyword>
<keyword id="KW-0689">Ribosomal protein</keyword>
<keyword id="KW-0694">RNA-binding</keyword>
<keyword id="KW-0699">rRNA-binding</keyword>
<feature type="chain" id="PRO_1000055199" description="Large ribosomal subunit protein uL6">
    <location>
        <begin position="1"/>
        <end position="177"/>
    </location>
</feature>
<protein>
    <recommendedName>
        <fullName evidence="1">Large ribosomal subunit protein uL6</fullName>
    </recommendedName>
    <alternativeName>
        <fullName evidence="2">50S ribosomal protein L6</fullName>
    </alternativeName>
</protein>
<organism>
    <name type="scientific">Bradyrhizobium sp. (strain BTAi1 / ATCC BAA-1182)</name>
    <dbReference type="NCBI Taxonomy" id="288000"/>
    <lineage>
        <taxon>Bacteria</taxon>
        <taxon>Pseudomonadati</taxon>
        <taxon>Pseudomonadota</taxon>
        <taxon>Alphaproteobacteria</taxon>
        <taxon>Hyphomicrobiales</taxon>
        <taxon>Nitrobacteraceae</taxon>
        <taxon>Bradyrhizobium</taxon>
    </lineage>
</organism>